<proteinExistence type="evidence at protein level"/>
<protein>
    <recommendedName>
        <fullName>Beta-enolase</fullName>
        <ecNumber evidence="3">4.2.1.11</ecNumber>
    </recommendedName>
    <alternativeName>
        <fullName>2-phospho-D-glycerate hydro-lyase</fullName>
    </alternativeName>
    <alternativeName>
        <fullName>Enolase 3</fullName>
    </alternativeName>
    <alternativeName>
        <fullName>Muscle-specific enolase</fullName>
        <shortName>MSE</shortName>
    </alternativeName>
    <alternativeName>
        <fullName>Skeletal muscle enolase</fullName>
    </alternativeName>
</protein>
<evidence type="ECO:0000250" key="1"/>
<evidence type="ECO:0000250" key="2">
    <source>
        <dbReference type="UniProtKB" id="P13929"/>
    </source>
</evidence>
<evidence type="ECO:0000250" key="3">
    <source>
        <dbReference type="UniProtKB" id="P15429"/>
    </source>
</evidence>
<evidence type="ECO:0000269" key="4">
    <source>
    </source>
</evidence>
<evidence type="ECO:0000269" key="5">
    <source>
    </source>
</evidence>
<evidence type="ECO:0000269" key="6">
    <source>
    </source>
</evidence>
<evidence type="ECO:0000269" key="7">
    <source>
    </source>
</evidence>
<evidence type="ECO:0000305" key="8"/>
<evidence type="ECO:0007744" key="9">
    <source>
    </source>
</evidence>
<dbReference type="EC" id="4.2.1.11" evidence="3"/>
<dbReference type="EMBL" id="X61600">
    <property type="protein sequence ID" value="CAA43797.1"/>
    <property type="molecule type" value="Genomic_DNA"/>
</dbReference>
<dbReference type="EMBL" id="X57747">
    <property type="protein sequence ID" value="CAA40913.1"/>
    <property type="molecule type" value="mRNA"/>
</dbReference>
<dbReference type="EMBL" id="X62667">
    <property type="protein sequence ID" value="CAA44540.1"/>
    <property type="molecule type" value="mRNA"/>
</dbReference>
<dbReference type="EMBL" id="AK002485">
    <property type="protein sequence ID" value="BAB22137.1"/>
    <property type="molecule type" value="mRNA"/>
</dbReference>
<dbReference type="EMBL" id="BC013460">
    <property type="protein sequence ID" value="AAH13460.1"/>
    <property type="molecule type" value="mRNA"/>
</dbReference>
<dbReference type="EMBL" id="M20745">
    <property type="protein sequence ID" value="AAA37554.1"/>
    <property type="molecule type" value="mRNA"/>
</dbReference>
<dbReference type="CCDS" id="CCDS24961.1"/>
<dbReference type="PIR" id="S17109">
    <property type="entry name" value="NOMSB"/>
</dbReference>
<dbReference type="RefSeq" id="NP_001129534.1">
    <property type="nucleotide sequence ID" value="NM_001136062.3"/>
</dbReference>
<dbReference type="RefSeq" id="NP_001263214.1">
    <property type="nucleotide sequence ID" value="NM_001276285.2"/>
</dbReference>
<dbReference type="RefSeq" id="NP_001417900.1">
    <property type="nucleotide sequence ID" value="NM_001430971.1"/>
</dbReference>
<dbReference type="RefSeq" id="NP_001417901.1">
    <property type="nucleotide sequence ID" value="NM_001430972.1"/>
</dbReference>
<dbReference type="RefSeq" id="NP_031959.1">
    <property type="nucleotide sequence ID" value="NM_007933.4"/>
</dbReference>
<dbReference type="RefSeq" id="XP_006532225.1">
    <property type="nucleotide sequence ID" value="XM_006532162.4"/>
</dbReference>
<dbReference type="SMR" id="P21550"/>
<dbReference type="BioGRID" id="199453">
    <property type="interactions" value="29"/>
</dbReference>
<dbReference type="FunCoup" id="P21550">
    <property type="interactions" value="1448"/>
</dbReference>
<dbReference type="IntAct" id="P21550">
    <property type="interactions" value="14"/>
</dbReference>
<dbReference type="MINT" id="P21550"/>
<dbReference type="STRING" id="10090.ENSMUSP00000104188"/>
<dbReference type="GlyGen" id="P21550">
    <property type="glycosylation" value="1 site, 1 O-linked glycan (1 site)"/>
</dbReference>
<dbReference type="iPTMnet" id="P21550"/>
<dbReference type="PhosphoSitePlus" id="P21550"/>
<dbReference type="SwissPalm" id="P21550"/>
<dbReference type="CPTAC" id="non-CPTAC-3791"/>
<dbReference type="CPTAC" id="non-CPTAC-3792"/>
<dbReference type="jPOST" id="P21550"/>
<dbReference type="PaxDb" id="10090-ENSMUSP00000072620"/>
<dbReference type="PeptideAtlas" id="P21550"/>
<dbReference type="ProteomicsDB" id="277875"/>
<dbReference type="Pumba" id="P21550"/>
<dbReference type="Antibodypedia" id="630">
    <property type="antibodies" value="410 antibodies from 35 providers"/>
</dbReference>
<dbReference type="DNASU" id="13808"/>
<dbReference type="Ensembl" id="ENSMUST00000072841.12">
    <property type="protein sequence ID" value="ENSMUSP00000072620.6"/>
    <property type="gene ID" value="ENSMUSG00000060600.16"/>
</dbReference>
<dbReference type="Ensembl" id="ENSMUST00000108548.8">
    <property type="protein sequence ID" value="ENSMUSP00000104188.2"/>
    <property type="gene ID" value="ENSMUSG00000060600.16"/>
</dbReference>
<dbReference type="Ensembl" id="ENSMUST00000170716.8">
    <property type="protein sequence ID" value="ENSMUSP00000128714.2"/>
    <property type="gene ID" value="ENSMUSG00000060600.16"/>
</dbReference>
<dbReference type="GeneID" id="13808"/>
<dbReference type="KEGG" id="mmu:13808"/>
<dbReference type="UCSC" id="uc007jvx.3">
    <property type="organism name" value="mouse"/>
</dbReference>
<dbReference type="AGR" id="MGI:95395"/>
<dbReference type="CTD" id="2027"/>
<dbReference type="MGI" id="MGI:95395">
    <property type="gene designation" value="Eno3"/>
</dbReference>
<dbReference type="VEuPathDB" id="HostDB:ENSMUSG00000060600"/>
<dbReference type="eggNOG" id="KOG2670">
    <property type="taxonomic scope" value="Eukaryota"/>
</dbReference>
<dbReference type="GeneTree" id="ENSGT00950000182805"/>
<dbReference type="HOGENOM" id="CLU_031223_0_0_1"/>
<dbReference type="InParanoid" id="P21550"/>
<dbReference type="OMA" id="GMSITKI"/>
<dbReference type="OrthoDB" id="1739814at2759"/>
<dbReference type="PhylomeDB" id="P21550"/>
<dbReference type="TreeFam" id="TF300391"/>
<dbReference type="BRENDA" id="4.2.1.11">
    <property type="organism ID" value="3474"/>
</dbReference>
<dbReference type="Reactome" id="R-MMU-70171">
    <property type="pathway name" value="Glycolysis"/>
</dbReference>
<dbReference type="Reactome" id="R-MMU-70263">
    <property type="pathway name" value="Gluconeogenesis"/>
</dbReference>
<dbReference type="UniPathway" id="UPA00109">
    <property type="reaction ID" value="UER00187"/>
</dbReference>
<dbReference type="BioGRID-ORCS" id="13808">
    <property type="hits" value="6 hits in 80 CRISPR screens"/>
</dbReference>
<dbReference type="CD-CODE" id="CE726F99">
    <property type="entry name" value="Postsynaptic density"/>
</dbReference>
<dbReference type="PRO" id="PR:P21550"/>
<dbReference type="Proteomes" id="UP000000589">
    <property type="component" value="Chromosome 11"/>
</dbReference>
<dbReference type="RNAct" id="P21550">
    <property type="molecule type" value="protein"/>
</dbReference>
<dbReference type="Bgee" id="ENSMUSG00000060600">
    <property type="expression patterns" value="Expressed in sternocleidomastoid and 260 other cell types or tissues"/>
</dbReference>
<dbReference type="ExpressionAtlas" id="P21550">
    <property type="expression patterns" value="baseline and differential"/>
</dbReference>
<dbReference type="GO" id="GO:0005829">
    <property type="term" value="C:cytosol"/>
    <property type="evidence" value="ECO:0000314"/>
    <property type="project" value="MGI"/>
</dbReference>
<dbReference type="GO" id="GO:0000015">
    <property type="term" value="C:phosphopyruvate hydratase complex"/>
    <property type="evidence" value="ECO:0007669"/>
    <property type="project" value="InterPro"/>
</dbReference>
<dbReference type="GO" id="GO:0005886">
    <property type="term" value="C:plasma membrane"/>
    <property type="evidence" value="ECO:0007669"/>
    <property type="project" value="Ensembl"/>
</dbReference>
<dbReference type="GO" id="GO:0000287">
    <property type="term" value="F:magnesium ion binding"/>
    <property type="evidence" value="ECO:0007669"/>
    <property type="project" value="InterPro"/>
</dbReference>
<dbReference type="GO" id="GO:0004634">
    <property type="term" value="F:phosphopyruvate hydratase activity"/>
    <property type="evidence" value="ECO:0000314"/>
    <property type="project" value="MGI"/>
</dbReference>
<dbReference type="GO" id="GO:0061621">
    <property type="term" value="P:canonical glycolysis"/>
    <property type="evidence" value="ECO:0000316"/>
    <property type="project" value="MGI"/>
</dbReference>
<dbReference type="GO" id="GO:0006096">
    <property type="term" value="P:glycolytic process"/>
    <property type="evidence" value="ECO:0000250"/>
    <property type="project" value="CAFA"/>
</dbReference>
<dbReference type="CDD" id="cd03313">
    <property type="entry name" value="enolase"/>
    <property type="match status" value="1"/>
</dbReference>
<dbReference type="FunFam" id="3.30.390.10:FF:000001">
    <property type="entry name" value="Enolase"/>
    <property type="match status" value="1"/>
</dbReference>
<dbReference type="FunFam" id="3.20.20.120:FF:000002">
    <property type="entry name" value="Enolase 1"/>
    <property type="match status" value="1"/>
</dbReference>
<dbReference type="Gene3D" id="3.20.20.120">
    <property type="entry name" value="Enolase-like C-terminal domain"/>
    <property type="match status" value="1"/>
</dbReference>
<dbReference type="Gene3D" id="3.30.390.10">
    <property type="entry name" value="Enolase-like, N-terminal domain"/>
    <property type="match status" value="1"/>
</dbReference>
<dbReference type="HAMAP" id="MF_00318">
    <property type="entry name" value="Enolase"/>
    <property type="match status" value="1"/>
</dbReference>
<dbReference type="InterPro" id="IPR000941">
    <property type="entry name" value="Enolase"/>
</dbReference>
<dbReference type="InterPro" id="IPR036849">
    <property type="entry name" value="Enolase-like_C_sf"/>
</dbReference>
<dbReference type="InterPro" id="IPR029017">
    <property type="entry name" value="Enolase-like_N"/>
</dbReference>
<dbReference type="InterPro" id="IPR020810">
    <property type="entry name" value="Enolase_C"/>
</dbReference>
<dbReference type="InterPro" id="IPR020809">
    <property type="entry name" value="Enolase_CS"/>
</dbReference>
<dbReference type="InterPro" id="IPR020811">
    <property type="entry name" value="Enolase_N"/>
</dbReference>
<dbReference type="NCBIfam" id="TIGR01060">
    <property type="entry name" value="eno"/>
    <property type="match status" value="1"/>
</dbReference>
<dbReference type="PANTHER" id="PTHR11902:SF5">
    <property type="entry name" value="BETA-ENOLASE"/>
    <property type="match status" value="1"/>
</dbReference>
<dbReference type="PANTHER" id="PTHR11902">
    <property type="entry name" value="ENOLASE"/>
    <property type="match status" value="1"/>
</dbReference>
<dbReference type="Pfam" id="PF00113">
    <property type="entry name" value="Enolase_C"/>
    <property type="match status" value="1"/>
</dbReference>
<dbReference type="Pfam" id="PF03952">
    <property type="entry name" value="Enolase_N"/>
    <property type="match status" value="1"/>
</dbReference>
<dbReference type="PIRSF" id="PIRSF001400">
    <property type="entry name" value="Enolase"/>
    <property type="match status" value="1"/>
</dbReference>
<dbReference type="PRINTS" id="PR00148">
    <property type="entry name" value="ENOLASE"/>
</dbReference>
<dbReference type="SFLD" id="SFLDS00001">
    <property type="entry name" value="Enolase"/>
    <property type="match status" value="1"/>
</dbReference>
<dbReference type="SFLD" id="SFLDF00002">
    <property type="entry name" value="enolase"/>
    <property type="match status" value="1"/>
</dbReference>
<dbReference type="SMART" id="SM01192">
    <property type="entry name" value="Enolase_C"/>
    <property type="match status" value="1"/>
</dbReference>
<dbReference type="SMART" id="SM01193">
    <property type="entry name" value="Enolase_N"/>
    <property type="match status" value="1"/>
</dbReference>
<dbReference type="SUPFAM" id="SSF51604">
    <property type="entry name" value="Enolase C-terminal domain-like"/>
    <property type="match status" value="1"/>
</dbReference>
<dbReference type="SUPFAM" id="SSF54826">
    <property type="entry name" value="Enolase N-terminal domain-like"/>
    <property type="match status" value="1"/>
</dbReference>
<dbReference type="PROSITE" id="PS00164">
    <property type="entry name" value="ENOLASE"/>
    <property type="match status" value="1"/>
</dbReference>
<comment type="function">
    <text evidence="3">Glycolytic enzyme that catalyzes the conversion of 2-phosphoglycerate to phosphoenolpyruvate. Appears to have a function in striated muscle development and regeneration.</text>
</comment>
<comment type="catalytic activity">
    <reaction evidence="3">
        <text>(2R)-2-phosphoglycerate = phosphoenolpyruvate + H2O</text>
        <dbReference type="Rhea" id="RHEA:10164"/>
        <dbReference type="ChEBI" id="CHEBI:15377"/>
        <dbReference type="ChEBI" id="CHEBI:58289"/>
        <dbReference type="ChEBI" id="CHEBI:58702"/>
        <dbReference type="EC" id="4.2.1.11"/>
    </reaction>
    <physiologicalReaction direction="left-to-right" evidence="3">
        <dbReference type="Rhea" id="RHEA:10165"/>
    </physiologicalReaction>
</comment>
<comment type="cofactor">
    <cofactor>
        <name>Mg(2+)</name>
        <dbReference type="ChEBI" id="CHEBI:18420"/>
    </cofactor>
    <text>Mg(2+) is required for catalysis and for stabilizing the dimer.</text>
</comment>
<comment type="pathway">
    <text evidence="3">Carbohydrate degradation; glycolysis; pyruvate from D-glyceraldehyde 3-phosphate: step 4/5.</text>
</comment>
<comment type="subunit">
    <text evidence="1">Mammalian enolase is composed of 3 isozyme subunits, alpha, beta and gamma, which can form homodimers or heterodimers which are cell-type and development-specific. In vitro, interacts with several glycolytic enzymes including PKM, PGM, CKM and ALDO. Also binds PLG and troponin, in vitro. Interacts with PNKD (By similarity).</text>
</comment>
<comment type="subcellular location">
    <subcellularLocation>
        <location evidence="4">Cytoplasm</location>
    </subcellularLocation>
    <text evidence="1">Localized to the Z line. Some colocalization with CKM at M-band (By similarity).</text>
</comment>
<comment type="tissue specificity">
    <text evidence="4 5">Brain (at protein level). The alpha/alpha homodimer is expressed in embryo and in most adult tissues. The alpha/beta heterodimer and the beta/beta homodimer are found in striated muscle, and the alpha/gamma heterodimer and the gamma/gamma homodimer in neurons. In striated muscle, the fiber-type order of ENO3 expression is IIB &gt; IIX &gt; IIA &gt; I.</text>
</comment>
<comment type="developmental stage">
    <text evidence="6 7">During ontogenesis, there is a transition from the alpha/alpha homodimer to the alpha/beta heterodimer in striated muscle cells, and to the alpha/gamma heterodimer in nerve cells. In hindleg muscle, first expressed at 15 dpc after which, levels increase sharply between 15 dpc and 17 dpc. A steep prenatal rise in expression accompanies the formation of secondary myofibers and the development of innervation. High levels continue throughout newborn and adult stages. Beginning at postnatal day 5, a second sharp increase in expression correlates with the definitive specialization of the myofibers. Later in development, mainly expressed in fast-twitch fibers. In cardiac muscle, first expressed in the embryo in the cardiac tube.</text>
</comment>
<comment type="induction">
    <text>Levels decrease in degenerating myofibers, and increase with their regeneration.</text>
</comment>
<comment type="similarity">
    <text evidence="8">Belongs to the enolase family.</text>
</comment>
<gene>
    <name type="primary">Eno3</name>
    <name type="synonym">Eno-3</name>
</gene>
<keyword id="KW-0007">Acetylation</keyword>
<keyword id="KW-0963">Cytoplasm</keyword>
<keyword id="KW-0903">Direct protein sequencing</keyword>
<keyword id="KW-0324">Glycolysis</keyword>
<keyword id="KW-0456">Lyase</keyword>
<keyword id="KW-0460">Magnesium</keyword>
<keyword id="KW-0479">Metal-binding</keyword>
<keyword id="KW-0597">Phosphoprotein</keyword>
<keyword id="KW-1185">Reference proteome</keyword>
<organism>
    <name type="scientific">Mus musculus</name>
    <name type="common">Mouse</name>
    <dbReference type="NCBI Taxonomy" id="10090"/>
    <lineage>
        <taxon>Eukaryota</taxon>
        <taxon>Metazoa</taxon>
        <taxon>Chordata</taxon>
        <taxon>Craniata</taxon>
        <taxon>Vertebrata</taxon>
        <taxon>Euteleostomi</taxon>
        <taxon>Mammalia</taxon>
        <taxon>Eutheria</taxon>
        <taxon>Euarchontoglires</taxon>
        <taxon>Glires</taxon>
        <taxon>Rodentia</taxon>
        <taxon>Myomorpha</taxon>
        <taxon>Muroidea</taxon>
        <taxon>Muridae</taxon>
        <taxon>Murinae</taxon>
        <taxon>Mus</taxon>
        <taxon>Mus</taxon>
    </lineage>
</organism>
<feature type="initiator methionine" description="Removed" evidence="2">
    <location>
        <position position="1"/>
    </location>
</feature>
<feature type="chain" id="PRO_0000134108" description="Beta-enolase">
    <location>
        <begin position="2"/>
        <end position="434"/>
    </location>
</feature>
<feature type="active site" description="Proton donor" evidence="1">
    <location>
        <position position="210"/>
    </location>
</feature>
<feature type="active site" description="Proton acceptor" evidence="1">
    <location>
        <position position="343"/>
    </location>
</feature>
<feature type="binding site" evidence="1">
    <location>
        <position position="158"/>
    </location>
    <ligand>
        <name>substrate</name>
    </ligand>
</feature>
<feature type="binding site" evidence="1">
    <location>
        <position position="167"/>
    </location>
    <ligand>
        <name>substrate</name>
    </ligand>
</feature>
<feature type="binding site" evidence="1">
    <location>
        <position position="245"/>
    </location>
    <ligand>
        <name>Mg(2+)</name>
        <dbReference type="ChEBI" id="CHEBI:18420"/>
    </ligand>
</feature>
<feature type="binding site" evidence="1">
    <location>
        <position position="293"/>
    </location>
    <ligand>
        <name>Mg(2+)</name>
        <dbReference type="ChEBI" id="CHEBI:18420"/>
    </ligand>
</feature>
<feature type="binding site" evidence="1">
    <location>
        <position position="293"/>
    </location>
    <ligand>
        <name>substrate</name>
    </ligand>
</feature>
<feature type="binding site" evidence="1">
    <location>
        <position position="318"/>
    </location>
    <ligand>
        <name>Mg(2+)</name>
        <dbReference type="ChEBI" id="CHEBI:18420"/>
    </ligand>
</feature>
<feature type="binding site" evidence="1">
    <location>
        <position position="318"/>
    </location>
    <ligand>
        <name>substrate</name>
    </ligand>
</feature>
<feature type="binding site" evidence="1">
    <location>
        <begin position="370"/>
        <end position="373"/>
    </location>
    <ligand>
        <name>substrate</name>
    </ligand>
</feature>
<feature type="binding site" evidence="1">
    <location>
        <position position="394"/>
    </location>
    <ligand>
        <name>substrate</name>
    </ligand>
</feature>
<feature type="modified residue" description="N-acetylalanine" evidence="2">
    <location>
        <position position="2"/>
    </location>
</feature>
<feature type="modified residue" description="Phosphothreonine" evidence="3">
    <location>
        <position position="72"/>
    </location>
</feature>
<feature type="modified residue" description="Phosphoserine" evidence="3">
    <location>
        <position position="83"/>
    </location>
</feature>
<feature type="modified residue" description="Phosphoserine" evidence="3">
    <location>
        <position position="157"/>
    </location>
</feature>
<feature type="modified residue" description="Phosphoserine" evidence="2">
    <location>
        <position position="176"/>
    </location>
</feature>
<feature type="modified residue" description="Phosphothreonine" evidence="3">
    <location>
        <position position="205"/>
    </location>
</feature>
<feature type="modified residue" description="Phosphothreonine" evidence="3">
    <location>
        <position position="229"/>
    </location>
</feature>
<feature type="modified residue" description="Phosphotyrosine" evidence="3">
    <location>
        <position position="236"/>
    </location>
</feature>
<feature type="modified residue" description="Phosphoserine" evidence="9">
    <location>
        <position position="263"/>
    </location>
</feature>
<feature type="sequence conflict" description="In Ref. 6; AAA37554." evidence="8" ref="6">
    <original>AG</original>
    <variation>NA</variation>
    <location>
        <begin position="234"/>
        <end position="235"/>
    </location>
</feature>
<sequence>MAMQKIFAREILDSRGNPTVEVDLHTAKGRFRAAVPSGASTGIYEALELRDGDKARYLGKGVLKAVEHINKTLGPALLEKKLSVVDQEKVDKFMIELDGTENKSKFGANAILGVSLAVCKAGAAEKGVPLYRHIADLAGNPDLVLPVPAFNVINGGSHAGNKLAMQEFMILPVGASSFKEAMRIGAEVYHHLKGVIKAKYGKDATNVGDEGGFAPNILENNEALELLKTAIQAAGYPDKVVIGMDVAASEFYRNGKYDLDFKSPDDPARHISGEKLGELYKNFIQNYPVVSIEDPFDQDDWATWTSFLSGVDIQIVGDDLTVTNPKRIAQAVEKKACNCLLLKVNQIGSVTESIQACKLAQSNGWGVMVSHRSGETEDTFIADLVVGLCTGQIKTGAPCRSERLAKYNQLMRIEEALGDKAVFAGRKFRNPKAK</sequence>
<accession>P21550</accession>
<reference key="1">
    <citation type="submission" date="1991-09" db="EMBL/GenBank/DDBJ databases">
        <authorList>
            <person name="Lamande N."/>
            <person name="Brosset S."/>
            <person name="Keller A."/>
            <person name="Lucas M."/>
            <person name="Lazar M."/>
        </authorList>
    </citation>
    <scope>NUCLEOTIDE SEQUENCE [GENOMIC DNA / MRNA]</scope>
    <source>
        <strain>BALB/cJ</strain>
        <strain>Swiss Webster</strain>
        <tissue>Liver</tissue>
        <tissue>Skeletal muscle</tissue>
    </source>
</reference>
<reference key="2">
    <citation type="journal article" date="1992" name="Dev. Biol.">
        <title>Beta-enolase is a marker of human myoblast heterogeneity prior to differentiation.</title>
        <authorList>
            <person name="Peterson C.A."/>
            <person name="Cho M."/>
            <person name="Rastinejad F."/>
            <person name="Blau H.M."/>
        </authorList>
    </citation>
    <scope>NUCLEOTIDE SEQUENCE [MRNA]</scope>
    <source>
        <strain>C3H/HeJ</strain>
    </source>
</reference>
<reference key="3">
    <citation type="journal article" date="2005" name="Science">
        <title>The transcriptional landscape of the mammalian genome.</title>
        <authorList>
            <person name="Carninci P."/>
            <person name="Kasukawa T."/>
            <person name="Katayama S."/>
            <person name="Gough J."/>
            <person name="Frith M.C."/>
            <person name="Maeda N."/>
            <person name="Oyama R."/>
            <person name="Ravasi T."/>
            <person name="Lenhard B."/>
            <person name="Wells C."/>
            <person name="Kodzius R."/>
            <person name="Shimokawa K."/>
            <person name="Bajic V.B."/>
            <person name="Brenner S.E."/>
            <person name="Batalov S."/>
            <person name="Forrest A.R."/>
            <person name="Zavolan M."/>
            <person name="Davis M.J."/>
            <person name="Wilming L.G."/>
            <person name="Aidinis V."/>
            <person name="Allen J.E."/>
            <person name="Ambesi-Impiombato A."/>
            <person name="Apweiler R."/>
            <person name="Aturaliya R.N."/>
            <person name="Bailey T.L."/>
            <person name="Bansal M."/>
            <person name="Baxter L."/>
            <person name="Beisel K.W."/>
            <person name="Bersano T."/>
            <person name="Bono H."/>
            <person name="Chalk A.M."/>
            <person name="Chiu K.P."/>
            <person name="Choudhary V."/>
            <person name="Christoffels A."/>
            <person name="Clutterbuck D.R."/>
            <person name="Crowe M.L."/>
            <person name="Dalla E."/>
            <person name="Dalrymple B.P."/>
            <person name="de Bono B."/>
            <person name="Della Gatta G."/>
            <person name="di Bernardo D."/>
            <person name="Down T."/>
            <person name="Engstrom P."/>
            <person name="Fagiolini M."/>
            <person name="Faulkner G."/>
            <person name="Fletcher C.F."/>
            <person name="Fukushima T."/>
            <person name="Furuno M."/>
            <person name="Futaki S."/>
            <person name="Gariboldi M."/>
            <person name="Georgii-Hemming P."/>
            <person name="Gingeras T.R."/>
            <person name="Gojobori T."/>
            <person name="Green R.E."/>
            <person name="Gustincich S."/>
            <person name="Harbers M."/>
            <person name="Hayashi Y."/>
            <person name="Hensch T.K."/>
            <person name="Hirokawa N."/>
            <person name="Hill D."/>
            <person name="Huminiecki L."/>
            <person name="Iacono M."/>
            <person name="Ikeo K."/>
            <person name="Iwama A."/>
            <person name="Ishikawa T."/>
            <person name="Jakt M."/>
            <person name="Kanapin A."/>
            <person name="Katoh M."/>
            <person name="Kawasawa Y."/>
            <person name="Kelso J."/>
            <person name="Kitamura H."/>
            <person name="Kitano H."/>
            <person name="Kollias G."/>
            <person name="Krishnan S.P."/>
            <person name="Kruger A."/>
            <person name="Kummerfeld S.K."/>
            <person name="Kurochkin I.V."/>
            <person name="Lareau L.F."/>
            <person name="Lazarevic D."/>
            <person name="Lipovich L."/>
            <person name="Liu J."/>
            <person name="Liuni S."/>
            <person name="McWilliam S."/>
            <person name="Madan Babu M."/>
            <person name="Madera M."/>
            <person name="Marchionni L."/>
            <person name="Matsuda H."/>
            <person name="Matsuzawa S."/>
            <person name="Miki H."/>
            <person name="Mignone F."/>
            <person name="Miyake S."/>
            <person name="Morris K."/>
            <person name="Mottagui-Tabar S."/>
            <person name="Mulder N."/>
            <person name="Nakano N."/>
            <person name="Nakauchi H."/>
            <person name="Ng P."/>
            <person name="Nilsson R."/>
            <person name="Nishiguchi S."/>
            <person name="Nishikawa S."/>
            <person name="Nori F."/>
            <person name="Ohara O."/>
            <person name="Okazaki Y."/>
            <person name="Orlando V."/>
            <person name="Pang K.C."/>
            <person name="Pavan W.J."/>
            <person name="Pavesi G."/>
            <person name="Pesole G."/>
            <person name="Petrovsky N."/>
            <person name="Piazza S."/>
            <person name="Reed J."/>
            <person name="Reid J.F."/>
            <person name="Ring B.Z."/>
            <person name="Ringwald M."/>
            <person name="Rost B."/>
            <person name="Ruan Y."/>
            <person name="Salzberg S.L."/>
            <person name="Sandelin A."/>
            <person name="Schneider C."/>
            <person name="Schoenbach C."/>
            <person name="Sekiguchi K."/>
            <person name="Semple C.A."/>
            <person name="Seno S."/>
            <person name="Sessa L."/>
            <person name="Sheng Y."/>
            <person name="Shibata Y."/>
            <person name="Shimada H."/>
            <person name="Shimada K."/>
            <person name="Silva D."/>
            <person name="Sinclair B."/>
            <person name="Sperling S."/>
            <person name="Stupka E."/>
            <person name="Sugiura K."/>
            <person name="Sultana R."/>
            <person name="Takenaka Y."/>
            <person name="Taki K."/>
            <person name="Tammoja K."/>
            <person name="Tan S.L."/>
            <person name="Tang S."/>
            <person name="Taylor M.S."/>
            <person name="Tegner J."/>
            <person name="Teichmann S.A."/>
            <person name="Ueda H.R."/>
            <person name="van Nimwegen E."/>
            <person name="Verardo R."/>
            <person name="Wei C.L."/>
            <person name="Yagi K."/>
            <person name="Yamanishi H."/>
            <person name="Zabarovsky E."/>
            <person name="Zhu S."/>
            <person name="Zimmer A."/>
            <person name="Hide W."/>
            <person name="Bult C."/>
            <person name="Grimmond S.M."/>
            <person name="Teasdale R.D."/>
            <person name="Liu E.T."/>
            <person name="Brusic V."/>
            <person name="Quackenbush J."/>
            <person name="Wahlestedt C."/>
            <person name="Mattick J.S."/>
            <person name="Hume D.A."/>
            <person name="Kai C."/>
            <person name="Sasaki D."/>
            <person name="Tomaru Y."/>
            <person name="Fukuda S."/>
            <person name="Kanamori-Katayama M."/>
            <person name="Suzuki M."/>
            <person name="Aoki J."/>
            <person name="Arakawa T."/>
            <person name="Iida J."/>
            <person name="Imamura K."/>
            <person name="Itoh M."/>
            <person name="Kato T."/>
            <person name="Kawaji H."/>
            <person name="Kawagashira N."/>
            <person name="Kawashima T."/>
            <person name="Kojima M."/>
            <person name="Kondo S."/>
            <person name="Konno H."/>
            <person name="Nakano K."/>
            <person name="Ninomiya N."/>
            <person name="Nishio T."/>
            <person name="Okada M."/>
            <person name="Plessy C."/>
            <person name="Shibata K."/>
            <person name="Shiraki T."/>
            <person name="Suzuki S."/>
            <person name="Tagami M."/>
            <person name="Waki K."/>
            <person name="Watahiki A."/>
            <person name="Okamura-Oho Y."/>
            <person name="Suzuki H."/>
            <person name="Kawai J."/>
            <person name="Hayashizaki Y."/>
        </authorList>
    </citation>
    <scope>NUCLEOTIDE SEQUENCE [LARGE SCALE MRNA]</scope>
    <source>
        <strain>C57BL/6J</strain>
        <tissue>Kidney</tissue>
    </source>
</reference>
<reference key="4">
    <citation type="journal article" date="2004" name="Genome Res.">
        <title>The status, quality, and expansion of the NIH full-length cDNA project: the Mammalian Gene Collection (MGC).</title>
        <authorList>
            <consortium name="The MGC Project Team"/>
        </authorList>
    </citation>
    <scope>NUCLEOTIDE SEQUENCE [LARGE SCALE MRNA]</scope>
    <source>
        <strain>FVB/N</strain>
        <tissue>Colon</tissue>
    </source>
</reference>
<reference key="5">
    <citation type="submission" date="2007-07" db="UniProtKB">
        <authorList>
            <person name="Lubec G."/>
            <person name="Kang S.U."/>
            <person name="Yang J.W."/>
            <person name="Zigmond M."/>
        </authorList>
    </citation>
    <scope>PROTEIN SEQUENCE OF 33-50; 104-120; 257-262; 336-358 AND 373-394</scope>
    <scope>IDENTIFICATION BY MASS SPECTROMETRY</scope>
    <source>
        <strain>C57BL/6J</strain>
        <tissue>Brain</tissue>
    </source>
</reference>
<reference key="6">
    <citation type="journal article" date="1989" name="Proc. Natl. Acad. Sci. U.S.A.">
        <title>Murine muscle-specific enolase: cDNA cloning, sequence, and developmental expression.</title>
        <authorList>
            <person name="Lamande N."/>
            <person name="Mazo A.M."/>
            <person name="Lucas M."/>
            <person name="Montarras D."/>
            <person name="Pinset C."/>
            <person name="Gros F."/>
            <person name="Legault-Demare L."/>
            <person name="Lazar M."/>
        </authorList>
    </citation>
    <scope>NUCLEOTIDE SEQUENCE [MRNA] OF 59-434</scope>
</reference>
<reference key="7">
    <citation type="journal article" date="1992" name="Mech. Dev.">
        <title>Activation of the gene encoding the glycolytic enzyme beta-enolase during early myogenesis precedes an increased expression during fetal muscle development.</title>
        <authorList>
            <person name="Keller A."/>
            <person name="Ott M.O."/>
            <person name="Lamande N."/>
            <person name="Lucas M."/>
            <person name="Gros F."/>
            <person name="Buckingham M."/>
            <person name="Lazar M."/>
        </authorList>
    </citation>
    <scope>ACTIVATION DURING MYOGENESIS</scope>
</reference>
<reference key="8">
    <citation type="journal article" date="1995" name="Am. J. Physiol.">
        <title>Differential expression of alpha- and beta-enolase genes during rat heart development and hypertrophy.</title>
        <authorList>
            <person name="Keller A."/>
            <person name="Rouzeau J.-D."/>
            <person name="Farhadian F."/>
            <person name="Wisnewsky C."/>
            <person name="Marotte F."/>
            <person name="Lamande N."/>
            <person name="Samuel J.L."/>
            <person name="Schwartz K."/>
            <person name="Lazar M."/>
            <person name="Lucas M."/>
        </authorList>
    </citation>
    <scope>DEVELOPMENTAL STAGE</scope>
</reference>
<reference key="9">
    <citation type="journal article" date="1997" name="Biochem. J.">
        <title>Biochemical characterization of the mouse muscle-specific enolase: developmental changes in electrophoretic variants and selective binding to other proteins.</title>
        <authorList>
            <person name="Merkulova T."/>
            <person name="Lucas M."/>
            <person name="Jabet C."/>
            <person name="Lamande N."/>
            <person name="Rouzeau J.-D."/>
            <person name="Gros F."/>
            <person name="Lazar M."/>
            <person name="Keller A."/>
        </authorList>
    </citation>
    <scope>INTERACTION WITH PKM; PGM; CKM; ALDO AND TROPONIN</scope>
    <scope>DEVELOPMENTAL STAGE</scope>
</reference>
<reference key="10">
    <citation type="journal article" date="2000" name="Biol. Cell">
        <title>Fibre-type distribution and subcellular localisation of alpha and beta enolase in mouse striated muscle.</title>
        <authorList>
            <person name="Keller A."/>
            <person name="Demeurie J."/>
            <person name="Merkulova T."/>
            <person name="Geraud G."/>
            <person name="Cywiner-Golenzer C."/>
            <person name="Lucas M."/>
            <person name="Chatelet F.-P."/>
        </authorList>
    </citation>
    <scope>SUBCELLULAR LOCATION</scope>
    <scope>TISSUE SPECIFICITY</scope>
</reference>
<reference key="11">
    <citation type="journal article" date="2000" name="Eur. J. Biochem.">
        <title>Differential modulation of alpha, beta and gamma enolase isoforms in regenerating mouse skeletal muscle.</title>
        <authorList>
            <person name="Merkulova T."/>
            <person name="Dehaupas M."/>
            <person name="Nevers M.C."/>
            <person name="Creminon C."/>
            <person name="Alameddine H."/>
            <person name="Keller A."/>
        </authorList>
    </citation>
    <scope>EXPRESSION REGULATION</scope>
</reference>
<reference key="12">
    <citation type="journal article" date="2010" name="Cell">
        <title>A tissue-specific atlas of mouse protein phosphorylation and expression.</title>
        <authorList>
            <person name="Huttlin E.L."/>
            <person name="Jedrychowski M.P."/>
            <person name="Elias J.E."/>
            <person name="Goswami T."/>
            <person name="Rad R."/>
            <person name="Beausoleil S.A."/>
            <person name="Villen J."/>
            <person name="Haas W."/>
            <person name="Sowa M.E."/>
            <person name="Gygi S.P."/>
        </authorList>
    </citation>
    <scope>PHOSPHORYLATION [LARGE SCALE ANALYSIS] AT SER-263</scope>
    <scope>IDENTIFICATION BY MASS SPECTROMETRY [LARGE SCALE ANALYSIS]</scope>
    <source>
        <tissue>Brown adipose tissue</tissue>
        <tissue>Heart</tissue>
        <tissue>Kidney</tissue>
        <tissue>Lung</tissue>
        <tissue>Spleen</tissue>
        <tissue>Testis</tissue>
    </source>
</reference>
<reference key="13">
    <citation type="journal article" date="2013" name="Biol. Reprod.">
        <title>Disruption of a spermatogenic cell-specific mouse enolase 4 (eno4) gene causes sperm structural defects and male infertility.</title>
        <authorList>
            <person name="Nakamura N."/>
            <person name="Dai Q."/>
            <person name="Williams J."/>
            <person name="Goulding E.H."/>
            <person name="Willis W.D."/>
            <person name="Brown P.R."/>
            <person name="Eddy E.M."/>
        </authorList>
    </citation>
    <scope>TISSUE SPECIFICITY</scope>
</reference>
<name>ENOB_MOUSE</name>